<reference key="1">
    <citation type="journal article" date="2007" name="BMC Microbiol.">
        <title>Subtle genetic changes enhance virulence of methicillin resistant and sensitive Staphylococcus aureus.</title>
        <authorList>
            <person name="Highlander S.K."/>
            <person name="Hulten K.G."/>
            <person name="Qin X."/>
            <person name="Jiang H."/>
            <person name="Yerrapragada S."/>
            <person name="Mason E.O. Jr."/>
            <person name="Shang Y."/>
            <person name="Williams T.M."/>
            <person name="Fortunov R.M."/>
            <person name="Liu Y."/>
            <person name="Igboeli O."/>
            <person name="Petrosino J."/>
            <person name="Tirumalai M."/>
            <person name="Uzman A."/>
            <person name="Fox G.E."/>
            <person name="Cardenas A.M."/>
            <person name="Muzny D.M."/>
            <person name="Hemphill L."/>
            <person name="Ding Y."/>
            <person name="Dugan S."/>
            <person name="Blyth P.R."/>
            <person name="Buhay C.J."/>
            <person name="Dinh H.H."/>
            <person name="Hawes A.C."/>
            <person name="Holder M."/>
            <person name="Kovar C.L."/>
            <person name="Lee S.L."/>
            <person name="Liu W."/>
            <person name="Nazareth L.V."/>
            <person name="Wang Q."/>
            <person name="Zhou J."/>
            <person name="Kaplan S.L."/>
            <person name="Weinstock G.M."/>
        </authorList>
    </citation>
    <scope>NUCLEOTIDE SEQUENCE [LARGE SCALE GENOMIC DNA]</scope>
    <source>
        <strain>USA300 / TCH1516</strain>
    </source>
</reference>
<organism>
    <name type="scientific">Staphylococcus aureus (strain USA300 / TCH1516)</name>
    <dbReference type="NCBI Taxonomy" id="451516"/>
    <lineage>
        <taxon>Bacteria</taxon>
        <taxon>Bacillati</taxon>
        <taxon>Bacillota</taxon>
        <taxon>Bacilli</taxon>
        <taxon>Bacillales</taxon>
        <taxon>Staphylococcaceae</taxon>
        <taxon>Staphylococcus</taxon>
    </lineage>
</organism>
<protein>
    <recommendedName>
        <fullName evidence="1">2,3,4,5-tetrahydropyridine-2,6-dicarboxylate N-acetyltransferase</fullName>
        <ecNumber evidence="1">2.3.1.89</ecNumber>
    </recommendedName>
    <alternativeName>
        <fullName evidence="1">Tetrahydrodipicolinate N-acetyltransferase</fullName>
        <shortName evidence="1">THP acetyltransferase</shortName>
        <shortName evidence="1">Tetrahydropicolinate acetylase</shortName>
    </alternativeName>
</protein>
<feature type="chain" id="PRO_0000376699" description="2,3,4,5-tetrahydropyridine-2,6-dicarboxylate N-acetyltransferase">
    <location>
        <begin position="1"/>
        <end position="239"/>
    </location>
</feature>
<proteinExistence type="inferred from homology"/>
<evidence type="ECO:0000255" key="1">
    <source>
        <dbReference type="HAMAP-Rule" id="MF_01691"/>
    </source>
</evidence>
<dbReference type="EC" id="2.3.1.89" evidence="1"/>
<dbReference type="EMBL" id="CP000730">
    <property type="protein sequence ID" value="ABX29343.1"/>
    <property type="molecule type" value="Genomic_DNA"/>
</dbReference>
<dbReference type="SMR" id="A8Z3X5"/>
<dbReference type="KEGG" id="sax:USA300HOU_1332"/>
<dbReference type="HOGENOM" id="CLU_103751_0_0_9"/>
<dbReference type="UniPathway" id="UPA00034">
    <property type="reaction ID" value="UER00022"/>
</dbReference>
<dbReference type="GO" id="GO:0047200">
    <property type="term" value="F:tetrahydrodipicolinate N-acetyltransferase activity"/>
    <property type="evidence" value="ECO:0007669"/>
    <property type="project" value="UniProtKB-EC"/>
</dbReference>
<dbReference type="GO" id="GO:0019877">
    <property type="term" value="P:diaminopimelate biosynthetic process"/>
    <property type="evidence" value="ECO:0007669"/>
    <property type="project" value="UniProtKB-UniRule"/>
</dbReference>
<dbReference type="GO" id="GO:0009089">
    <property type="term" value="P:lysine biosynthetic process via diaminopimelate"/>
    <property type="evidence" value="ECO:0007669"/>
    <property type="project" value="UniProtKB-UniRule"/>
</dbReference>
<dbReference type="CDD" id="cd03350">
    <property type="entry name" value="LbH_THP_succinylT"/>
    <property type="match status" value="1"/>
</dbReference>
<dbReference type="Gene3D" id="2.160.10.10">
    <property type="entry name" value="Hexapeptide repeat proteins"/>
    <property type="match status" value="1"/>
</dbReference>
<dbReference type="Gene3D" id="3.30.70.250">
    <property type="entry name" value="Malonyl-CoA ACP transacylase, ACP-binding"/>
    <property type="match status" value="1"/>
</dbReference>
<dbReference type="HAMAP" id="MF_01691">
    <property type="entry name" value="DapH"/>
    <property type="match status" value="1"/>
</dbReference>
<dbReference type="InterPro" id="IPR019873">
    <property type="entry name" value="DapH"/>
</dbReference>
<dbReference type="InterPro" id="IPR013710">
    <property type="entry name" value="DapH_N"/>
</dbReference>
<dbReference type="InterPro" id="IPR001451">
    <property type="entry name" value="Hexapep"/>
</dbReference>
<dbReference type="InterPro" id="IPR018357">
    <property type="entry name" value="Hexapep_transf_CS"/>
</dbReference>
<dbReference type="InterPro" id="IPR050179">
    <property type="entry name" value="Trans_hexapeptide_repeat"/>
</dbReference>
<dbReference type="InterPro" id="IPR011004">
    <property type="entry name" value="Trimer_LpxA-like_sf"/>
</dbReference>
<dbReference type="NCBIfam" id="TIGR03532">
    <property type="entry name" value="DapD_Ac"/>
    <property type="match status" value="1"/>
</dbReference>
<dbReference type="PANTHER" id="PTHR43300:SF10">
    <property type="entry name" value="2,3,4,5-TETRAHYDROPYRIDINE-2,6-DICARBOXYLATE N-ACETYLTRANSFERASE"/>
    <property type="match status" value="1"/>
</dbReference>
<dbReference type="PANTHER" id="PTHR43300">
    <property type="entry name" value="ACETYLTRANSFERASE"/>
    <property type="match status" value="1"/>
</dbReference>
<dbReference type="Pfam" id="PF08503">
    <property type="entry name" value="DapH_N"/>
    <property type="match status" value="1"/>
</dbReference>
<dbReference type="Pfam" id="PF00132">
    <property type="entry name" value="Hexapep"/>
    <property type="match status" value="1"/>
</dbReference>
<dbReference type="Pfam" id="PF14602">
    <property type="entry name" value="Hexapep_2"/>
    <property type="match status" value="1"/>
</dbReference>
<dbReference type="SUPFAM" id="SSF51161">
    <property type="entry name" value="Trimeric LpxA-like enzymes"/>
    <property type="match status" value="1"/>
</dbReference>
<dbReference type="PROSITE" id="PS00101">
    <property type="entry name" value="HEXAPEP_TRANSFERASES"/>
    <property type="match status" value="1"/>
</dbReference>
<name>DAPH_STAAT</name>
<gene>
    <name evidence="1" type="primary">dapH</name>
    <name type="ordered locus">USA300HOU_1332</name>
</gene>
<comment type="function">
    <text evidence="1">Catalyzes the transfer of an acetyl group from acetyl-CoA to tetrahydrodipicolinate.</text>
</comment>
<comment type="catalytic activity">
    <reaction evidence="1">
        <text>(S)-2,3,4,5-tetrahydrodipicolinate + acetyl-CoA + H2O = L-2-acetamido-6-oxoheptanedioate + CoA</text>
        <dbReference type="Rhea" id="RHEA:13085"/>
        <dbReference type="ChEBI" id="CHEBI:15377"/>
        <dbReference type="ChEBI" id="CHEBI:16845"/>
        <dbReference type="ChEBI" id="CHEBI:57287"/>
        <dbReference type="ChEBI" id="CHEBI:57288"/>
        <dbReference type="ChEBI" id="CHEBI:58117"/>
        <dbReference type="EC" id="2.3.1.89"/>
    </reaction>
</comment>
<comment type="pathway">
    <text evidence="1">Amino-acid biosynthesis; L-lysine biosynthesis via DAP pathway; LL-2,6-diaminopimelate from (S)-tetrahydrodipicolinate (acetylase route): step 1/3.</text>
</comment>
<comment type="similarity">
    <text evidence="1">Belongs to the transferase hexapeptide repeat family. DapH subfamily.</text>
</comment>
<sequence>MVQHLTAEEIIQYISDAKKSTPIKVYLNGNFEGITYPESFKVFGSEQSKVIFCEADDWKPFYEAYGSQFEDIEIEMDRRNSAIPLKDLTNTNARIEPGAFIREQAIIEDGAVVMMGATINIGAVVGEGTMIDMNATLGGRATTGKNVHVGAGAVLAGVIEPPSASPVIIEDDVLIGANAVILEGVRVGKGAIVAAGAIVTQDVPAGAVVAGTPAKVIKQASEVQDTKKEIVAALRKLND</sequence>
<keyword id="KW-0012">Acyltransferase</keyword>
<keyword id="KW-0028">Amino-acid biosynthesis</keyword>
<keyword id="KW-0220">Diaminopimelate biosynthesis</keyword>
<keyword id="KW-0457">Lysine biosynthesis</keyword>
<keyword id="KW-0677">Repeat</keyword>
<keyword id="KW-0808">Transferase</keyword>
<accession>A8Z3X5</accession>